<keyword id="KW-0238">DNA-binding</keyword>
<keyword id="KW-0479">Metal-binding</keyword>
<keyword id="KW-0539">Nucleus</keyword>
<keyword id="KW-0597">Phosphoprotein</keyword>
<keyword id="KW-1267">Proteomics identification</keyword>
<keyword id="KW-1185">Reference proteome</keyword>
<keyword id="KW-0677">Repeat</keyword>
<keyword id="KW-0804">Transcription</keyword>
<keyword id="KW-0805">Transcription regulation</keyword>
<keyword id="KW-0862">Zinc</keyword>
<keyword id="KW-0863">Zinc-finger</keyword>
<sequence>MRRKTRNFKHKTVKDNKVLTEGSDQESEKDNSQCCDPATNERVQAEKRQYVCTECGKAFSQSANLTVHERIHTGEKPYKCKECGKAFSHSSNLVVHRRIHTGLKPYTCSECGKSFSGKSHLIRHQGIHSGEKTYECKECGKAFSRSSGLISHHRVHTGEKPYSCIECGKAFSRSSNLTQHQRMHRGKKVYKCKECGKTCGSNTKIMDHQRIHTGEKPYECDECGKTFILRKTLNEHQRLHRREKPYKCNECGKAFTSNRNLVDHQRVHTGEKPYKCNECGKTFRQTSQVILHLRTHTKEKPYKCSECGKAYRYSSQLIQHQRKHNEEKETS</sequence>
<name>ZN660_HUMAN</name>
<gene>
    <name type="primary">ZNF660</name>
</gene>
<protein>
    <recommendedName>
        <fullName>Zinc finger protein 660</fullName>
    </recommendedName>
</protein>
<comment type="function">
    <text>May be involved in transcriptional regulation.</text>
</comment>
<comment type="interaction">
    <interactant intactId="EBI-12376497">
        <id>Q6AZW8</id>
    </interactant>
    <interactant intactId="EBI-10255081">
        <id>Q9NYL2-2</id>
        <label>MAP3K20</label>
    </interactant>
    <organismsDiffer>false</organismsDiffer>
    <experiments>3</experiments>
</comment>
<comment type="interaction">
    <interactant intactId="EBI-12376497">
        <id>Q6AZW8</id>
    </interactant>
    <interactant intactId="EBI-395959">
        <id>Q15287</id>
        <label>RNPS1</label>
    </interactant>
    <organismsDiffer>false</organismsDiffer>
    <experiments>3</experiments>
</comment>
<comment type="interaction">
    <interactant intactId="EBI-12376497">
        <id>Q6AZW8</id>
    </interactant>
    <interactant intactId="EBI-727004">
        <id>O00560</id>
        <label>SDCBP</label>
    </interactant>
    <organismsDiffer>false</organismsDiffer>
    <experiments>3</experiments>
</comment>
<comment type="interaction">
    <interactant intactId="EBI-12376497">
        <id>Q6AZW8</id>
    </interactant>
    <interactant intactId="EBI-2555767">
        <id>Q15973</id>
        <label>ZNF124</label>
    </interactant>
    <organismsDiffer>false</organismsDiffer>
    <experiments>3</experiments>
</comment>
<comment type="subcellular location">
    <subcellularLocation>
        <location evidence="3">Nucleus</location>
    </subcellularLocation>
</comment>
<comment type="similarity">
    <text evidence="3">Belongs to the krueppel C2H2-type zinc-finger protein family.</text>
</comment>
<evidence type="ECO:0000255" key="1">
    <source>
        <dbReference type="PROSITE-ProRule" id="PRU00042"/>
    </source>
</evidence>
<evidence type="ECO:0000256" key="2">
    <source>
        <dbReference type="SAM" id="MobiDB-lite"/>
    </source>
</evidence>
<evidence type="ECO:0000305" key="3"/>
<evidence type="ECO:0007744" key="4">
    <source>
    </source>
</evidence>
<feature type="chain" id="PRO_0000047701" description="Zinc finger protein 660">
    <location>
        <begin position="1"/>
        <end position="331"/>
    </location>
</feature>
<feature type="zinc finger region" description="C2H2-type 1" evidence="1">
    <location>
        <begin position="50"/>
        <end position="72"/>
    </location>
</feature>
<feature type="zinc finger region" description="C2H2-type 2" evidence="1">
    <location>
        <begin position="78"/>
        <end position="100"/>
    </location>
</feature>
<feature type="zinc finger region" description="C2H2-type 3" evidence="1">
    <location>
        <begin position="106"/>
        <end position="128"/>
    </location>
</feature>
<feature type="zinc finger region" description="C2H2-type 4" evidence="1">
    <location>
        <begin position="134"/>
        <end position="156"/>
    </location>
</feature>
<feature type="zinc finger region" description="C2H2-type 5" evidence="1">
    <location>
        <begin position="162"/>
        <end position="184"/>
    </location>
</feature>
<feature type="zinc finger region" description="C2H2-type 6" evidence="1">
    <location>
        <begin position="190"/>
        <end position="212"/>
    </location>
</feature>
<feature type="zinc finger region" description="C2H2-type 7" evidence="1">
    <location>
        <begin position="218"/>
        <end position="240"/>
    </location>
</feature>
<feature type="zinc finger region" description="C2H2-type 8" evidence="1">
    <location>
        <begin position="246"/>
        <end position="268"/>
    </location>
</feature>
<feature type="zinc finger region" description="C2H2-type 9" evidence="1">
    <location>
        <begin position="274"/>
        <end position="296"/>
    </location>
</feature>
<feature type="zinc finger region" description="C2H2-type 10" evidence="1">
    <location>
        <begin position="302"/>
        <end position="324"/>
    </location>
</feature>
<feature type="region of interest" description="Disordered" evidence="2">
    <location>
        <begin position="1"/>
        <end position="35"/>
    </location>
</feature>
<feature type="compositionally biased region" description="Basic residues" evidence="2">
    <location>
        <begin position="1"/>
        <end position="12"/>
    </location>
</feature>
<feature type="modified residue" description="Phosphoserine" evidence="4">
    <location>
        <position position="23"/>
    </location>
</feature>
<feature type="sequence conflict" description="In Ref. 1; BAC04303." evidence="3" ref="1">
    <original>K</original>
    <variation>N</variation>
    <location>
        <position position="57"/>
    </location>
</feature>
<accession>Q6AZW8</accession>
<accession>Q7Z331</accession>
<accession>Q8N9M8</accession>
<organism>
    <name type="scientific">Homo sapiens</name>
    <name type="common">Human</name>
    <dbReference type="NCBI Taxonomy" id="9606"/>
    <lineage>
        <taxon>Eukaryota</taxon>
        <taxon>Metazoa</taxon>
        <taxon>Chordata</taxon>
        <taxon>Craniata</taxon>
        <taxon>Vertebrata</taxon>
        <taxon>Euteleostomi</taxon>
        <taxon>Mammalia</taxon>
        <taxon>Eutheria</taxon>
        <taxon>Euarchontoglires</taxon>
        <taxon>Primates</taxon>
        <taxon>Haplorrhini</taxon>
        <taxon>Catarrhini</taxon>
        <taxon>Hominidae</taxon>
        <taxon>Homo</taxon>
    </lineage>
</organism>
<reference key="1">
    <citation type="journal article" date="2004" name="Nat. Genet.">
        <title>Complete sequencing and characterization of 21,243 full-length human cDNAs.</title>
        <authorList>
            <person name="Ota T."/>
            <person name="Suzuki Y."/>
            <person name="Nishikawa T."/>
            <person name="Otsuki T."/>
            <person name="Sugiyama T."/>
            <person name="Irie R."/>
            <person name="Wakamatsu A."/>
            <person name="Hayashi K."/>
            <person name="Sato H."/>
            <person name="Nagai K."/>
            <person name="Kimura K."/>
            <person name="Makita H."/>
            <person name="Sekine M."/>
            <person name="Obayashi M."/>
            <person name="Nishi T."/>
            <person name="Shibahara T."/>
            <person name="Tanaka T."/>
            <person name="Ishii S."/>
            <person name="Yamamoto J."/>
            <person name="Saito K."/>
            <person name="Kawai Y."/>
            <person name="Isono Y."/>
            <person name="Nakamura Y."/>
            <person name="Nagahari K."/>
            <person name="Murakami K."/>
            <person name="Yasuda T."/>
            <person name="Iwayanagi T."/>
            <person name="Wagatsuma M."/>
            <person name="Shiratori A."/>
            <person name="Sudo H."/>
            <person name="Hosoiri T."/>
            <person name="Kaku Y."/>
            <person name="Kodaira H."/>
            <person name="Kondo H."/>
            <person name="Sugawara M."/>
            <person name="Takahashi M."/>
            <person name="Kanda K."/>
            <person name="Yokoi T."/>
            <person name="Furuya T."/>
            <person name="Kikkawa E."/>
            <person name="Omura Y."/>
            <person name="Abe K."/>
            <person name="Kamihara K."/>
            <person name="Katsuta N."/>
            <person name="Sato K."/>
            <person name="Tanikawa M."/>
            <person name="Yamazaki M."/>
            <person name="Ninomiya K."/>
            <person name="Ishibashi T."/>
            <person name="Yamashita H."/>
            <person name="Murakawa K."/>
            <person name="Fujimori K."/>
            <person name="Tanai H."/>
            <person name="Kimata M."/>
            <person name="Watanabe M."/>
            <person name="Hiraoka S."/>
            <person name="Chiba Y."/>
            <person name="Ishida S."/>
            <person name="Ono Y."/>
            <person name="Takiguchi S."/>
            <person name="Watanabe S."/>
            <person name="Yosida M."/>
            <person name="Hotuta T."/>
            <person name="Kusano J."/>
            <person name="Kanehori K."/>
            <person name="Takahashi-Fujii A."/>
            <person name="Hara H."/>
            <person name="Tanase T.-O."/>
            <person name="Nomura Y."/>
            <person name="Togiya S."/>
            <person name="Komai F."/>
            <person name="Hara R."/>
            <person name="Takeuchi K."/>
            <person name="Arita M."/>
            <person name="Imose N."/>
            <person name="Musashino K."/>
            <person name="Yuuki H."/>
            <person name="Oshima A."/>
            <person name="Sasaki N."/>
            <person name="Aotsuka S."/>
            <person name="Yoshikawa Y."/>
            <person name="Matsunawa H."/>
            <person name="Ichihara T."/>
            <person name="Shiohata N."/>
            <person name="Sano S."/>
            <person name="Moriya S."/>
            <person name="Momiyama H."/>
            <person name="Satoh N."/>
            <person name="Takami S."/>
            <person name="Terashima Y."/>
            <person name="Suzuki O."/>
            <person name="Nakagawa S."/>
            <person name="Senoh A."/>
            <person name="Mizoguchi H."/>
            <person name="Goto Y."/>
            <person name="Shimizu F."/>
            <person name="Wakebe H."/>
            <person name="Hishigaki H."/>
            <person name="Watanabe T."/>
            <person name="Sugiyama A."/>
            <person name="Takemoto M."/>
            <person name="Kawakami B."/>
            <person name="Yamazaki M."/>
            <person name="Watanabe K."/>
            <person name="Kumagai A."/>
            <person name="Itakura S."/>
            <person name="Fukuzumi Y."/>
            <person name="Fujimori Y."/>
            <person name="Komiyama M."/>
            <person name="Tashiro H."/>
            <person name="Tanigami A."/>
            <person name="Fujiwara T."/>
            <person name="Ono T."/>
            <person name="Yamada K."/>
            <person name="Fujii Y."/>
            <person name="Ozaki K."/>
            <person name="Hirao M."/>
            <person name="Ohmori Y."/>
            <person name="Kawabata A."/>
            <person name="Hikiji T."/>
            <person name="Kobatake N."/>
            <person name="Inagaki H."/>
            <person name="Ikema Y."/>
            <person name="Okamoto S."/>
            <person name="Okitani R."/>
            <person name="Kawakami T."/>
            <person name="Noguchi S."/>
            <person name="Itoh T."/>
            <person name="Shigeta K."/>
            <person name="Senba T."/>
            <person name="Matsumura K."/>
            <person name="Nakajima Y."/>
            <person name="Mizuno T."/>
            <person name="Morinaga M."/>
            <person name="Sasaki M."/>
            <person name="Togashi T."/>
            <person name="Oyama M."/>
            <person name="Hata H."/>
            <person name="Watanabe M."/>
            <person name="Komatsu T."/>
            <person name="Mizushima-Sugano J."/>
            <person name="Satoh T."/>
            <person name="Shirai Y."/>
            <person name="Takahashi Y."/>
            <person name="Nakagawa K."/>
            <person name="Okumura K."/>
            <person name="Nagase T."/>
            <person name="Nomura N."/>
            <person name="Kikuchi H."/>
            <person name="Masuho Y."/>
            <person name="Yamashita R."/>
            <person name="Nakai K."/>
            <person name="Yada T."/>
            <person name="Nakamura Y."/>
            <person name="Ohara O."/>
            <person name="Isogai T."/>
            <person name="Sugano S."/>
        </authorList>
    </citation>
    <scope>NUCLEOTIDE SEQUENCE [LARGE SCALE MRNA]</scope>
    <source>
        <tissue>Astrocyte</tissue>
    </source>
</reference>
<reference key="2">
    <citation type="journal article" date="2004" name="Genome Res.">
        <title>The status, quality, and expansion of the NIH full-length cDNA project: the Mammalian Gene Collection (MGC).</title>
        <authorList>
            <consortium name="The MGC Project Team"/>
        </authorList>
    </citation>
    <scope>NUCLEOTIDE SEQUENCE [LARGE SCALE MRNA]</scope>
    <source>
        <tissue>Brain</tissue>
    </source>
</reference>
<reference key="3">
    <citation type="journal article" date="2007" name="BMC Genomics">
        <title>The full-ORF clone resource of the German cDNA consortium.</title>
        <authorList>
            <person name="Bechtel S."/>
            <person name="Rosenfelder H."/>
            <person name="Duda A."/>
            <person name="Schmidt C.P."/>
            <person name="Ernst U."/>
            <person name="Wellenreuther R."/>
            <person name="Mehrle A."/>
            <person name="Schuster C."/>
            <person name="Bahr A."/>
            <person name="Bloecker H."/>
            <person name="Heubner D."/>
            <person name="Hoerlein A."/>
            <person name="Michel G."/>
            <person name="Wedler H."/>
            <person name="Koehrer K."/>
            <person name="Ottenwaelder B."/>
            <person name="Poustka A."/>
            <person name="Wiemann S."/>
            <person name="Schupp I."/>
        </authorList>
    </citation>
    <scope>NUCLEOTIDE SEQUENCE [LARGE SCALE MRNA] OF 82-331</scope>
    <source>
        <tissue>Uterus</tissue>
    </source>
</reference>
<reference key="4">
    <citation type="journal article" date="2011" name="Sci. Signal.">
        <title>System-wide temporal characterization of the proteome and phosphoproteome of human embryonic stem cell differentiation.</title>
        <authorList>
            <person name="Rigbolt K.T."/>
            <person name="Prokhorova T.A."/>
            <person name="Akimov V."/>
            <person name="Henningsen J."/>
            <person name="Johansen P.T."/>
            <person name="Kratchmarova I."/>
            <person name="Kassem M."/>
            <person name="Mann M."/>
            <person name="Olsen J.V."/>
            <person name="Blagoev B."/>
        </authorList>
    </citation>
    <scope>PHOSPHORYLATION [LARGE SCALE ANALYSIS] AT SER-23</scope>
    <scope>IDENTIFICATION BY MASS SPECTROMETRY [LARGE SCALE ANALYSIS]</scope>
</reference>
<proteinExistence type="evidence at protein level"/>
<dbReference type="EMBL" id="AK094189">
    <property type="protein sequence ID" value="BAC04303.1"/>
    <property type="molecule type" value="mRNA"/>
</dbReference>
<dbReference type="EMBL" id="BC075094">
    <property type="protein sequence ID" value="AAH75094.1"/>
    <property type="molecule type" value="mRNA"/>
</dbReference>
<dbReference type="EMBL" id="BC075095">
    <property type="protein sequence ID" value="AAH75095.1"/>
    <property type="molecule type" value="mRNA"/>
</dbReference>
<dbReference type="EMBL" id="BX538171">
    <property type="protein sequence ID" value="CAD98047.1"/>
    <property type="molecule type" value="mRNA"/>
</dbReference>
<dbReference type="CCDS" id="CCDS2716.1"/>
<dbReference type="RefSeq" id="NP_775929.2">
    <property type="nucleotide sequence ID" value="NM_173658.4"/>
</dbReference>
<dbReference type="RefSeq" id="XP_005265147.1">
    <property type="nucleotide sequence ID" value="XM_005265090.4"/>
</dbReference>
<dbReference type="RefSeq" id="XP_006713180.1">
    <property type="nucleotide sequence ID" value="XM_006713117.3"/>
</dbReference>
<dbReference type="RefSeq" id="XP_011531924.1">
    <property type="nucleotide sequence ID" value="XM_011533622.2"/>
</dbReference>
<dbReference type="SMR" id="Q6AZW8"/>
<dbReference type="BioGRID" id="130088">
    <property type="interactions" value="7"/>
</dbReference>
<dbReference type="FunCoup" id="Q6AZW8">
    <property type="interactions" value="1"/>
</dbReference>
<dbReference type="IntAct" id="Q6AZW8">
    <property type="interactions" value="6"/>
</dbReference>
<dbReference type="STRING" id="9606.ENSP00000324605"/>
<dbReference type="GlyGen" id="Q6AZW8">
    <property type="glycosylation" value="1 site, 1 O-linked glycan (1 site)"/>
</dbReference>
<dbReference type="iPTMnet" id="Q6AZW8"/>
<dbReference type="PhosphoSitePlus" id="Q6AZW8"/>
<dbReference type="BioMuta" id="ZNF660"/>
<dbReference type="DMDM" id="74762291"/>
<dbReference type="jPOST" id="Q6AZW8"/>
<dbReference type="MassIVE" id="Q6AZW8"/>
<dbReference type="PaxDb" id="9606-ENSP00000324605"/>
<dbReference type="PeptideAtlas" id="Q6AZW8"/>
<dbReference type="ProteomicsDB" id="66201"/>
<dbReference type="Antibodypedia" id="12502">
    <property type="antibodies" value="115 antibodies from 19 providers"/>
</dbReference>
<dbReference type="DNASU" id="285349"/>
<dbReference type="Ensembl" id="ENST00000322734.2">
    <property type="protein sequence ID" value="ENSP00000324605.2"/>
    <property type="gene ID" value="ENSG00000144792.9"/>
</dbReference>
<dbReference type="Ensembl" id="ENST00000625494.1">
    <property type="protein sequence ID" value="ENSP00000487319.1"/>
    <property type="gene ID" value="ENSG00000280661.2"/>
</dbReference>
<dbReference type="GeneID" id="285349"/>
<dbReference type="KEGG" id="hsa:285349"/>
<dbReference type="MANE-Select" id="ENST00000322734.2">
    <property type="protein sequence ID" value="ENSP00000324605.2"/>
    <property type="RefSeq nucleotide sequence ID" value="NM_173658.4"/>
    <property type="RefSeq protein sequence ID" value="NP_775929.2"/>
</dbReference>
<dbReference type="UCSC" id="uc003cnl.2">
    <property type="organism name" value="human"/>
</dbReference>
<dbReference type="AGR" id="HGNC:26720"/>
<dbReference type="CTD" id="285349"/>
<dbReference type="DisGeNET" id="285349"/>
<dbReference type="GeneCards" id="ZNF660"/>
<dbReference type="HGNC" id="HGNC:26720">
    <property type="gene designation" value="ZNF660"/>
</dbReference>
<dbReference type="HPA" id="ENSG00000144792">
    <property type="expression patterns" value="Low tissue specificity"/>
</dbReference>
<dbReference type="neXtProt" id="NX_Q6AZW8"/>
<dbReference type="OpenTargets" id="ENSG00000144792"/>
<dbReference type="PharmGKB" id="PA134920595"/>
<dbReference type="VEuPathDB" id="HostDB:ENSG00000144792"/>
<dbReference type="eggNOG" id="KOG1721">
    <property type="taxonomic scope" value="Eukaryota"/>
</dbReference>
<dbReference type="GeneTree" id="ENSGT00940000163766"/>
<dbReference type="HOGENOM" id="CLU_002678_2_1_1"/>
<dbReference type="InParanoid" id="Q6AZW8"/>
<dbReference type="OMA" id="KTRNFKQ"/>
<dbReference type="OrthoDB" id="9411774at2759"/>
<dbReference type="PAN-GO" id="Q6AZW8">
    <property type="GO annotations" value="3 GO annotations based on evolutionary models"/>
</dbReference>
<dbReference type="PhylomeDB" id="Q6AZW8"/>
<dbReference type="TreeFam" id="TF337055"/>
<dbReference type="PathwayCommons" id="Q6AZW8"/>
<dbReference type="Reactome" id="R-HSA-212436">
    <property type="pathway name" value="Generic Transcription Pathway"/>
</dbReference>
<dbReference type="SignaLink" id="Q6AZW8"/>
<dbReference type="BioGRID-ORCS" id="285349">
    <property type="hits" value="11 hits in 1165 CRISPR screens"/>
</dbReference>
<dbReference type="GenomeRNAi" id="285349"/>
<dbReference type="Pharos" id="Q6AZW8">
    <property type="development level" value="Tdark"/>
</dbReference>
<dbReference type="PRO" id="PR:Q6AZW8"/>
<dbReference type="Proteomes" id="UP000005640">
    <property type="component" value="Chromosome 3"/>
</dbReference>
<dbReference type="RNAct" id="Q6AZW8">
    <property type="molecule type" value="protein"/>
</dbReference>
<dbReference type="Bgee" id="ENSG00000144792">
    <property type="expression patterns" value="Expressed in calcaneal tendon and 105 other cell types or tissues"/>
</dbReference>
<dbReference type="ExpressionAtlas" id="Q6AZW8">
    <property type="expression patterns" value="baseline and differential"/>
</dbReference>
<dbReference type="GO" id="GO:0005634">
    <property type="term" value="C:nucleus"/>
    <property type="evidence" value="ECO:0007669"/>
    <property type="project" value="UniProtKB-SubCell"/>
</dbReference>
<dbReference type="GO" id="GO:0003700">
    <property type="term" value="F:DNA-binding transcription factor activity"/>
    <property type="evidence" value="ECO:0000318"/>
    <property type="project" value="GO_Central"/>
</dbReference>
<dbReference type="GO" id="GO:0000978">
    <property type="term" value="F:RNA polymerase II cis-regulatory region sequence-specific DNA binding"/>
    <property type="evidence" value="ECO:0000318"/>
    <property type="project" value="GO_Central"/>
</dbReference>
<dbReference type="GO" id="GO:1990837">
    <property type="term" value="F:sequence-specific double-stranded DNA binding"/>
    <property type="evidence" value="ECO:0000314"/>
    <property type="project" value="ARUK-UCL"/>
</dbReference>
<dbReference type="GO" id="GO:0008270">
    <property type="term" value="F:zinc ion binding"/>
    <property type="evidence" value="ECO:0007669"/>
    <property type="project" value="UniProtKB-KW"/>
</dbReference>
<dbReference type="GO" id="GO:0006357">
    <property type="term" value="P:regulation of transcription by RNA polymerase II"/>
    <property type="evidence" value="ECO:0000318"/>
    <property type="project" value="GO_Central"/>
</dbReference>
<dbReference type="FunFam" id="3.30.160.60:FF:000666">
    <property type="entry name" value="RB-associated KRAB zinc finger protein-like"/>
    <property type="match status" value="1"/>
</dbReference>
<dbReference type="FunFam" id="3.30.160.60:FF:000824">
    <property type="entry name" value="Zinc finger protein 184"/>
    <property type="match status" value="1"/>
</dbReference>
<dbReference type="FunFam" id="3.30.160.60:FF:000016">
    <property type="entry name" value="zinc finger protein 37 homolog"/>
    <property type="match status" value="1"/>
</dbReference>
<dbReference type="FunFam" id="3.30.160.60:FF:000338">
    <property type="entry name" value="zinc finger protein 383"/>
    <property type="match status" value="1"/>
</dbReference>
<dbReference type="FunFam" id="3.30.160.60:FF:000912">
    <property type="entry name" value="Zinc finger protein 660"/>
    <property type="match status" value="1"/>
</dbReference>
<dbReference type="FunFam" id="3.30.160.60:FF:001584">
    <property type="entry name" value="Zinc finger protein 660"/>
    <property type="match status" value="1"/>
</dbReference>
<dbReference type="FunFam" id="3.30.160.60:FF:001730">
    <property type="entry name" value="zinc finger protein 660"/>
    <property type="match status" value="1"/>
</dbReference>
<dbReference type="FunFam" id="3.30.160.60:FF:000047">
    <property type="entry name" value="zinc finger protein OZF"/>
    <property type="match status" value="2"/>
</dbReference>
<dbReference type="FunFam" id="3.30.160.60:FF:000427">
    <property type="entry name" value="Zinc finger with KRAB and SCAN domains 7"/>
    <property type="match status" value="1"/>
</dbReference>
<dbReference type="Gene3D" id="3.30.160.60">
    <property type="entry name" value="Classic Zinc Finger"/>
    <property type="match status" value="10"/>
</dbReference>
<dbReference type="InterPro" id="IPR036236">
    <property type="entry name" value="Znf_C2H2_sf"/>
</dbReference>
<dbReference type="InterPro" id="IPR013087">
    <property type="entry name" value="Znf_C2H2_type"/>
</dbReference>
<dbReference type="PANTHER" id="PTHR23226">
    <property type="entry name" value="ZINC FINGER AND SCAN DOMAIN-CONTAINING"/>
    <property type="match status" value="1"/>
</dbReference>
<dbReference type="PANTHER" id="PTHR23226:SF366">
    <property type="entry name" value="ZINC FINGER PROTEIN ZFP2"/>
    <property type="match status" value="1"/>
</dbReference>
<dbReference type="Pfam" id="PF00096">
    <property type="entry name" value="zf-C2H2"/>
    <property type="match status" value="10"/>
</dbReference>
<dbReference type="SMART" id="SM00355">
    <property type="entry name" value="ZnF_C2H2"/>
    <property type="match status" value="10"/>
</dbReference>
<dbReference type="SUPFAM" id="SSF57667">
    <property type="entry name" value="beta-beta-alpha zinc fingers"/>
    <property type="match status" value="6"/>
</dbReference>
<dbReference type="PROSITE" id="PS00028">
    <property type="entry name" value="ZINC_FINGER_C2H2_1"/>
    <property type="match status" value="10"/>
</dbReference>
<dbReference type="PROSITE" id="PS50157">
    <property type="entry name" value="ZINC_FINGER_C2H2_2"/>
    <property type="match status" value="10"/>
</dbReference>